<reference key="1">
    <citation type="submission" date="2005-10" db="EMBL/GenBank/DDBJ databases">
        <title>Complete sequence of chromosome 3 of Burkholderia sp. 383.</title>
        <authorList>
            <consortium name="US DOE Joint Genome Institute"/>
            <person name="Copeland A."/>
            <person name="Lucas S."/>
            <person name="Lapidus A."/>
            <person name="Barry K."/>
            <person name="Detter J.C."/>
            <person name="Glavina T."/>
            <person name="Hammon N."/>
            <person name="Israni S."/>
            <person name="Pitluck S."/>
            <person name="Chain P."/>
            <person name="Malfatti S."/>
            <person name="Shin M."/>
            <person name="Vergez L."/>
            <person name="Schmutz J."/>
            <person name="Larimer F."/>
            <person name="Land M."/>
            <person name="Kyrpides N."/>
            <person name="Lykidis A."/>
            <person name="Richardson P."/>
        </authorList>
    </citation>
    <scope>NUCLEOTIDE SEQUENCE [LARGE SCALE GENOMIC DNA]</scope>
    <source>
        <strain>ATCC 17760 / DSM 23089 / LMG 22485 / NCIMB 9086 / R18194 / 383</strain>
    </source>
</reference>
<gene>
    <name evidence="1" type="primary">deoA</name>
    <name type="ordered locus">Bcep18194_C6660</name>
</gene>
<organism>
    <name type="scientific">Burkholderia lata (strain ATCC 17760 / DSM 23089 / LMG 22485 / NCIMB 9086 / R18194 / 383)</name>
    <dbReference type="NCBI Taxonomy" id="482957"/>
    <lineage>
        <taxon>Bacteria</taxon>
        <taxon>Pseudomonadati</taxon>
        <taxon>Pseudomonadota</taxon>
        <taxon>Betaproteobacteria</taxon>
        <taxon>Burkholderiales</taxon>
        <taxon>Burkholderiaceae</taxon>
        <taxon>Burkholderia</taxon>
        <taxon>Burkholderia cepacia complex</taxon>
    </lineage>
</organism>
<keyword id="KW-0328">Glycosyltransferase</keyword>
<keyword id="KW-0808">Transferase</keyword>
<comment type="function">
    <text evidence="1">The enzymes which catalyze the reversible phosphorolysis of pyrimidine nucleosides are involved in the degradation of these compounds and in their utilization as carbon and energy sources, or in the rescue of pyrimidine bases for nucleotide synthesis.</text>
</comment>
<comment type="catalytic activity">
    <reaction evidence="1">
        <text>thymidine + phosphate = 2-deoxy-alpha-D-ribose 1-phosphate + thymine</text>
        <dbReference type="Rhea" id="RHEA:16037"/>
        <dbReference type="ChEBI" id="CHEBI:17748"/>
        <dbReference type="ChEBI" id="CHEBI:17821"/>
        <dbReference type="ChEBI" id="CHEBI:43474"/>
        <dbReference type="ChEBI" id="CHEBI:57259"/>
        <dbReference type="EC" id="2.4.2.4"/>
    </reaction>
</comment>
<comment type="pathway">
    <text evidence="1">Pyrimidine metabolism; dTMP biosynthesis via salvage pathway; dTMP from thymine: step 1/2.</text>
</comment>
<comment type="subunit">
    <text evidence="1">Homodimer.</text>
</comment>
<comment type="similarity">
    <text evidence="1">Belongs to the thymidine/pyrimidine-nucleoside phosphorylase family.</text>
</comment>
<protein>
    <recommendedName>
        <fullName evidence="1">Thymidine phosphorylase</fullName>
        <ecNumber evidence="1">2.4.2.4</ecNumber>
    </recommendedName>
    <alternativeName>
        <fullName evidence="1">TdRPase</fullName>
    </alternativeName>
</protein>
<accession>Q39PA6</accession>
<dbReference type="EC" id="2.4.2.4" evidence="1"/>
<dbReference type="EMBL" id="CP000150">
    <property type="protein sequence ID" value="ABB05710.1"/>
    <property type="molecule type" value="Genomic_DNA"/>
</dbReference>
<dbReference type="RefSeq" id="WP_011349354.1">
    <property type="nucleotide sequence ID" value="NC_007509.1"/>
</dbReference>
<dbReference type="SMR" id="Q39PA6"/>
<dbReference type="GeneID" id="45092088"/>
<dbReference type="KEGG" id="bur:Bcep18194_C6660"/>
<dbReference type="PATRIC" id="fig|482957.22.peg.7170"/>
<dbReference type="HOGENOM" id="CLU_025040_0_1_4"/>
<dbReference type="UniPathway" id="UPA00578">
    <property type="reaction ID" value="UER00638"/>
</dbReference>
<dbReference type="Proteomes" id="UP000002705">
    <property type="component" value="Chromosome 3"/>
</dbReference>
<dbReference type="GO" id="GO:0005829">
    <property type="term" value="C:cytosol"/>
    <property type="evidence" value="ECO:0007669"/>
    <property type="project" value="TreeGrafter"/>
</dbReference>
<dbReference type="GO" id="GO:0004645">
    <property type="term" value="F:1,4-alpha-oligoglucan phosphorylase activity"/>
    <property type="evidence" value="ECO:0007669"/>
    <property type="project" value="InterPro"/>
</dbReference>
<dbReference type="GO" id="GO:0009032">
    <property type="term" value="F:thymidine phosphorylase activity"/>
    <property type="evidence" value="ECO:0007669"/>
    <property type="project" value="UniProtKB-UniRule"/>
</dbReference>
<dbReference type="GO" id="GO:0006206">
    <property type="term" value="P:pyrimidine nucleobase metabolic process"/>
    <property type="evidence" value="ECO:0007669"/>
    <property type="project" value="InterPro"/>
</dbReference>
<dbReference type="GO" id="GO:0046104">
    <property type="term" value="P:thymidine metabolic process"/>
    <property type="evidence" value="ECO:0007669"/>
    <property type="project" value="UniProtKB-UniRule"/>
</dbReference>
<dbReference type="FunFam" id="3.40.1030.10:FF:000001">
    <property type="entry name" value="Thymidine phosphorylase"/>
    <property type="match status" value="1"/>
</dbReference>
<dbReference type="Gene3D" id="3.40.1030.10">
    <property type="entry name" value="Nucleoside phosphorylase/phosphoribosyltransferase catalytic domain"/>
    <property type="match status" value="1"/>
</dbReference>
<dbReference type="Gene3D" id="3.90.1170.30">
    <property type="entry name" value="Pyrimidine nucleoside phosphorylase-like, C-terminal domain"/>
    <property type="match status" value="1"/>
</dbReference>
<dbReference type="Gene3D" id="1.20.970.10">
    <property type="entry name" value="Transferase, Pyrimidine Nucleoside Phosphorylase, Chain C"/>
    <property type="match status" value="1"/>
</dbReference>
<dbReference type="HAMAP" id="MF_01628">
    <property type="entry name" value="Thymid_phosp"/>
    <property type="match status" value="1"/>
</dbReference>
<dbReference type="InterPro" id="IPR000312">
    <property type="entry name" value="Glycosyl_Trfase_fam3"/>
</dbReference>
<dbReference type="InterPro" id="IPR017459">
    <property type="entry name" value="Glycosyl_Trfase_fam3_N_dom"/>
</dbReference>
<dbReference type="InterPro" id="IPR036320">
    <property type="entry name" value="Glycosyl_Trfase_fam3_N_dom_sf"/>
</dbReference>
<dbReference type="InterPro" id="IPR035902">
    <property type="entry name" value="Nuc_phospho_transferase"/>
</dbReference>
<dbReference type="InterPro" id="IPR036566">
    <property type="entry name" value="PYNP-like_C_sf"/>
</dbReference>
<dbReference type="InterPro" id="IPR013102">
    <property type="entry name" value="PYNP_C"/>
</dbReference>
<dbReference type="InterPro" id="IPR018090">
    <property type="entry name" value="Pyrmidine_PPas_bac/euk"/>
</dbReference>
<dbReference type="InterPro" id="IPR017872">
    <property type="entry name" value="Pyrmidine_PPase_CS"/>
</dbReference>
<dbReference type="InterPro" id="IPR000053">
    <property type="entry name" value="Thymidine/pyrmidine_PPase"/>
</dbReference>
<dbReference type="InterPro" id="IPR013465">
    <property type="entry name" value="Thymidine_Pase"/>
</dbReference>
<dbReference type="NCBIfam" id="NF004490">
    <property type="entry name" value="PRK05820.1"/>
    <property type="match status" value="1"/>
</dbReference>
<dbReference type="NCBIfam" id="TIGR02643">
    <property type="entry name" value="T_phosphoryl"/>
    <property type="match status" value="1"/>
</dbReference>
<dbReference type="NCBIfam" id="TIGR02644">
    <property type="entry name" value="Y_phosphoryl"/>
    <property type="match status" value="1"/>
</dbReference>
<dbReference type="PANTHER" id="PTHR10515">
    <property type="entry name" value="THYMIDINE PHOSPHORYLASE"/>
    <property type="match status" value="1"/>
</dbReference>
<dbReference type="PANTHER" id="PTHR10515:SF0">
    <property type="entry name" value="THYMIDINE PHOSPHORYLASE"/>
    <property type="match status" value="1"/>
</dbReference>
<dbReference type="Pfam" id="PF02885">
    <property type="entry name" value="Glycos_trans_3N"/>
    <property type="match status" value="1"/>
</dbReference>
<dbReference type="Pfam" id="PF00591">
    <property type="entry name" value="Glycos_transf_3"/>
    <property type="match status" value="1"/>
</dbReference>
<dbReference type="Pfam" id="PF07831">
    <property type="entry name" value="PYNP_C"/>
    <property type="match status" value="1"/>
</dbReference>
<dbReference type="PIRSF" id="PIRSF000478">
    <property type="entry name" value="TP_PyNP"/>
    <property type="match status" value="1"/>
</dbReference>
<dbReference type="SMART" id="SM00941">
    <property type="entry name" value="PYNP_C"/>
    <property type="match status" value="1"/>
</dbReference>
<dbReference type="SUPFAM" id="SSF52418">
    <property type="entry name" value="Nucleoside phosphorylase/phosphoribosyltransferase catalytic domain"/>
    <property type="match status" value="1"/>
</dbReference>
<dbReference type="SUPFAM" id="SSF47648">
    <property type="entry name" value="Nucleoside phosphorylase/phosphoribosyltransferase N-terminal domain"/>
    <property type="match status" value="1"/>
</dbReference>
<dbReference type="SUPFAM" id="SSF54680">
    <property type="entry name" value="Pyrimidine nucleoside phosphorylase C-terminal domain"/>
    <property type="match status" value="1"/>
</dbReference>
<dbReference type="PROSITE" id="PS00647">
    <property type="entry name" value="THYMID_PHOSPHORYLASE"/>
    <property type="match status" value="1"/>
</dbReference>
<sequence>MFLPQEFIRQKRNRQALDRDGIAAFVRGVTDGSVTEGQVAAFAMAVYFNDLSTDERVALTLAQRDSGDVLDWHALELDGPVIDKHSTGGVGDVVSLMLGPMVAACGGYVPMISGRGLGHTGGTLDKLSAIPGYNVTPDTDAFRRAVRDVGVAIIGQTARLAPADMRIYAIRDVTATVESVAMITASILSKKLAAGLDGLVMDVKVGSGAFMPTAEQSAELARSIVDVGNGAGMKTTAILTDMNQSLAPCAGNALEVACAIDYLTGKSRPARLHDVTMALSAELLVTGGLAHDVADARAKLLRALDSGAAAERFARMVTALGGPADLIDAPARHLARAKVVVPVPARASGVVQRVDCRALGLAVVALGGGRTRAADAIDYSVGLTALAEIGQRVEADQPLGYVHARDAAAAAHAVDTIQRSYVLGEAGDAPPTIYQQIG</sequence>
<proteinExistence type="inferred from homology"/>
<evidence type="ECO:0000255" key="1">
    <source>
        <dbReference type="HAMAP-Rule" id="MF_01628"/>
    </source>
</evidence>
<name>TYPH_BURL3</name>
<feature type="chain" id="PRO_0000335773" description="Thymidine phosphorylase">
    <location>
        <begin position="1"/>
        <end position="438"/>
    </location>
</feature>